<reference key="1">
    <citation type="journal article" date="1995" name="Microbiology">
        <title>Mesentericin Y105 gene clusters in Leuconostoc mesenteroides Y105.</title>
        <authorList>
            <person name="Fremaux C."/>
            <person name="Hechard A."/>
            <person name="Cenatiempo Y."/>
        </authorList>
    </citation>
    <scope>NUCLEOTIDE SEQUENCE [GENOMIC DNA]</scope>
    <source>
        <strain>Y105</strain>
    </source>
</reference>
<accession>Q10417</accession>
<sequence length="137" mass="16061">MPDLNINEDLINNYQKLTNDIEIFHEISYIDFYNKMNNGKNSLIYLGKPTCPICVKFVPMLHDILAAKNMHIDYFNVDTFFENNSSDKINYINFFQTLNISQLPSLIFTHGDMNYQRLPIYTIKTPINAWITAINDK</sequence>
<proteinExistence type="predicted"/>
<protein>
    <recommendedName>
        <fullName>Protein MesC</fullName>
    </recommendedName>
</protein>
<gene>
    <name type="primary">mesC</name>
</gene>
<organism>
    <name type="scientific">Leuconostoc mesenteroides</name>
    <dbReference type="NCBI Taxonomy" id="1245"/>
    <lineage>
        <taxon>Bacteria</taxon>
        <taxon>Bacillati</taxon>
        <taxon>Bacillota</taxon>
        <taxon>Bacilli</taxon>
        <taxon>Lactobacillales</taxon>
        <taxon>Lactobacillaceae</taxon>
        <taxon>Leuconostoc</taxon>
    </lineage>
</organism>
<feature type="chain" id="PRO_0000096440" description="Protein MesC">
    <location>
        <begin position="1"/>
        <end position="137"/>
    </location>
</feature>
<geneLocation type="plasmid">
    <name>pHY30</name>
</geneLocation>
<keyword id="KW-0614">Plasmid</keyword>
<name>MESC_LEUME</name>
<dbReference type="EMBL" id="X81803">
    <property type="protein sequence ID" value="CAA57401.1"/>
    <property type="molecule type" value="Genomic_DNA"/>
</dbReference>
<dbReference type="PIR" id="S52204">
    <property type="entry name" value="S52204"/>
</dbReference>
<dbReference type="RefSeq" id="WP_059442519.1">
    <property type="nucleotide sequence ID" value="NZ_JBGQPW010000012.1"/>
</dbReference>
<dbReference type="SMR" id="Q10417"/>
<dbReference type="CDD" id="cd02947">
    <property type="entry name" value="TRX_family"/>
    <property type="match status" value="1"/>
</dbReference>
<dbReference type="Gene3D" id="3.40.30.10">
    <property type="entry name" value="Glutaredoxin"/>
    <property type="match status" value="1"/>
</dbReference>
<dbReference type="InterPro" id="IPR036249">
    <property type="entry name" value="Thioredoxin-like_sf"/>
</dbReference>
<dbReference type="SUPFAM" id="SSF52833">
    <property type="entry name" value="Thioredoxin-like"/>
    <property type="match status" value="1"/>
</dbReference>